<sequence>MGDNSAAAAAVAAPRGRFGRICVFCGSNAGNRAVFGDAALQLGQELVSRGIELVYGGGSVGLMGLIAQTVLDGGCGVLGVIPKALMPTEISGASVGEVKIVSDMHERKAEMARQSDAFIALPGGYGTMEELLEMITWSQLGIHDKPVGLLNVDGYYDPLLALFDKGAAEGFIKADCRQIIVSAPTAHELLRKMEQYTRSHQEVAPRTSWEMSELGYGKTPEES</sequence>
<name>LOGL1_ORYSJ</name>
<feature type="chain" id="PRO_0000395053" description="Probable cytokinin riboside 5'-monophosphate phosphoribohydrolase LOGL1">
    <location>
        <begin position="1"/>
        <end position="223"/>
    </location>
</feature>
<feature type="region of interest" description="Disordered" evidence="3">
    <location>
        <begin position="201"/>
        <end position="223"/>
    </location>
</feature>
<feature type="binding site" evidence="2">
    <location>
        <position position="89"/>
    </location>
    <ligand>
        <name>substrate</name>
    </ligand>
</feature>
<feature type="binding site" evidence="2">
    <location>
        <begin position="107"/>
        <end position="108"/>
    </location>
    <ligand>
        <name>substrate</name>
    </ligand>
</feature>
<feature type="binding site" evidence="2">
    <location>
        <begin position="124"/>
        <end position="130"/>
    </location>
    <ligand>
        <name>substrate</name>
    </ligand>
</feature>
<feature type="binding site" evidence="2">
    <location>
        <position position="136"/>
    </location>
    <ligand>
        <name>substrate</name>
    </ligand>
</feature>
<keyword id="KW-0203">Cytokinin biosynthesis</keyword>
<keyword id="KW-0378">Hydrolase</keyword>
<keyword id="KW-1185">Reference proteome</keyword>
<comment type="function">
    <text evidence="1">Cytokinin-activating enzyme working in the direct activation pathway. Phosphoribohydrolase that converts inactive cytokinin nucleotides to the biologically active free-base forms (By similarity).</text>
</comment>
<comment type="catalytic activity">
    <reaction>
        <text>N(6)-(dimethylallyl)adenosine 5'-phosphate + H2O = N(6)-dimethylallyladenine + D-ribose 5-phosphate</text>
        <dbReference type="Rhea" id="RHEA:48560"/>
        <dbReference type="ChEBI" id="CHEBI:15377"/>
        <dbReference type="ChEBI" id="CHEBI:17660"/>
        <dbReference type="ChEBI" id="CHEBI:57526"/>
        <dbReference type="ChEBI" id="CHEBI:78346"/>
        <dbReference type="EC" id="3.2.2.n1"/>
    </reaction>
</comment>
<comment type="catalytic activity">
    <reaction>
        <text>9-ribosyl-trans-zeatin 5'-phosphate + H2O = trans-zeatin + D-ribose 5-phosphate</text>
        <dbReference type="Rhea" id="RHEA:48564"/>
        <dbReference type="ChEBI" id="CHEBI:15377"/>
        <dbReference type="ChEBI" id="CHEBI:16522"/>
        <dbReference type="ChEBI" id="CHEBI:78346"/>
        <dbReference type="ChEBI" id="CHEBI:87947"/>
        <dbReference type="EC" id="3.2.2.n1"/>
    </reaction>
</comment>
<comment type="tissue specificity">
    <text evidence="4">Expressed in shoot apex, immature inflorescences and flowers.</text>
</comment>
<comment type="similarity">
    <text evidence="5">Belongs to the LOG family.</text>
</comment>
<accession>Q8LR50</accession>
<accession>A0A0P0V796</accession>
<reference key="1">
    <citation type="journal article" date="2002" name="Nature">
        <title>The genome sequence and structure of rice chromosome 1.</title>
        <authorList>
            <person name="Sasaki T."/>
            <person name="Matsumoto T."/>
            <person name="Yamamoto K."/>
            <person name="Sakata K."/>
            <person name="Baba T."/>
            <person name="Katayose Y."/>
            <person name="Wu J."/>
            <person name="Niimura Y."/>
            <person name="Cheng Z."/>
            <person name="Nagamura Y."/>
            <person name="Antonio B.A."/>
            <person name="Kanamori H."/>
            <person name="Hosokawa S."/>
            <person name="Masukawa M."/>
            <person name="Arikawa K."/>
            <person name="Chiden Y."/>
            <person name="Hayashi M."/>
            <person name="Okamoto M."/>
            <person name="Ando T."/>
            <person name="Aoki H."/>
            <person name="Arita K."/>
            <person name="Hamada M."/>
            <person name="Harada C."/>
            <person name="Hijishita S."/>
            <person name="Honda M."/>
            <person name="Ichikawa Y."/>
            <person name="Idonuma A."/>
            <person name="Iijima M."/>
            <person name="Ikeda M."/>
            <person name="Ikeno M."/>
            <person name="Ito S."/>
            <person name="Ito T."/>
            <person name="Ito Y."/>
            <person name="Ito Y."/>
            <person name="Iwabuchi A."/>
            <person name="Kamiya K."/>
            <person name="Karasawa W."/>
            <person name="Katagiri S."/>
            <person name="Kikuta A."/>
            <person name="Kobayashi N."/>
            <person name="Kono I."/>
            <person name="Machita K."/>
            <person name="Maehara T."/>
            <person name="Mizuno H."/>
            <person name="Mizubayashi T."/>
            <person name="Mukai Y."/>
            <person name="Nagasaki H."/>
            <person name="Nakashima M."/>
            <person name="Nakama Y."/>
            <person name="Nakamichi Y."/>
            <person name="Nakamura M."/>
            <person name="Namiki N."/>
            <person name="Negishi M."/>
            <person name="Ohta I."/>
            <person name="Ono N."/>
            <person name="Saji S."/>
            <person name="Sakai K."/>
            <person name="Shibata M."/>
            <person name="Shimokawa T."/>
            <person name="Shomura A."/>
            <person name="Song J."/>
            <person name="Takazaki Y."/>
            <person name="Terasawa K."/>
            <person name="Tsuji K."/>
            <person name="Waki K."/>
            <person name="Yamagata H."/>
            <person name="Yamane H."/>
            <person name="Yoshiki S."/>
            <person name="Yoshihara R."/>
            <person name="Yukawa K."/>
            <person name="Zhong H."/>
            <person name="Iwama H."/>
            <person name="Endo T."/>
            <person name="Ito H."/>
            <person name="Hahn J.H."/>
            <person name="Kim H.-I."/>
            <person name="Eun M.-Y."/>
            <person name="Yano M."/>
            <person name="Jiang J."/>
            <person name="Gojobori T."/>
        </authorList>
    </citation>
    <scope>NUCLEOTIDE SEQUENCE [LARGE SCALE GENOMIC DNA]</scope>
    <source>
        <strain>cv. Nipponbare</strain>
    </source>
</reference>
<reference key="2">
    <citation type="journal article" date="2005" name="Nature">
        <title>The map-based sequence of the rice genome.</title>
        <authorList>
            <consortium name="International rice genome sequencing project (IRGSP)"/>
        </authorList>
    </citation>
    <scope>NUCLEOTIDE SEQUENCE [LARGE SCALE GENOMIC DNA]</scope>
    <source>
        <strain>cv. Nipponbare</strain>
    </source>
</reference>
<reference key="3">
    <citation type="journal article" date="2008" name="Nucleic Acids Res.">
        <title>The rice annotation project database (RAP-DB): 2008 update.</title>
        <authorList>
            <consortium name="The rice annotation project (RAP)"/>
        </authorList>
    </citation>
    <scope>GENOME REANNOTATION</scope>
    <source>
        <strain>cv. Nipponbare</strain>
    </source>
</reference>
<reference key="4">
    <citation type="journal article" date="2013" name="Rice">
        <title>Improvement of the Oryza sativa Nipponbare reference genome using next generation sequence and optical map data.</title>
        <authorList>
            <person name="Kawahara Y."/>
            <person name="de la Bastide M."/>
            <person name="Hamilton J.P."/>
            <person name="Kanamori H."/>
            <person name="McCombie W.R."/>
            <person name="Ouyang S."/>
            <person name="Schwartz D.C."/>
            <person name="Tanaka T."/>
            <person name="Wu J."/>
            <person name="Zhou S."/>
            <person name="Childs K.L."/>
            <person name="Davidson R.M."/>
            <person name="Lin H."/>
            <person name="Quesada-Ocampo L."/>
            <person name="Vaillancourt B."/>
            <person name="Sakai H."/>
            <person name="Lee S.S."/>
            <person name="Kim J."/>
            <person name="Numa H."/>
            <person name="Itoh T."/>
            <person name="Buell C.R."/>
            <person name="Matsumoto T."/>
        </authorList>
    </citation>
    <scope>GENOME REANNOTATION</scope>
    <source>
        <strain>cv. Nipponbare</strain>
    </source>
</reference>
<reference key="5">
    <citation type="journal article" date="2005" name="PLoS Biol.">
        <title>The genomes of Oryza sativa: a history of duplications.</title>
        <authorList>
            <person name="Yu J."/>
            <person name="Wang J."/>
            <person name="Lin W."/>
            <person name="Li S."/>
            <person name="Li H."/>
            <person name="Zhou J."/>
            <person name="Ni P."/>
            <person name="Dong W."/>
            <person name="Hu S."/>
            <person name="Zeng C."/>
            <person name="Zhang J."/>
            <person name="Zhang Y."/>
            <person name="Li R."/>
            <person name="Xu Z."/>
            <person name="Li S."/>
            <person name="Li X."/>
            <person name="Zheng H."/>
            <person name="Cong L."/>
            <person name="Lin L."/>
            <person name="Yin J."/>
            <person name="Geng J."/>
            <person name="Li G."/>
            <person name="Shi J."/>
            <person name="Liu J."/>
            <person name="Lv H."/>
            <person name="Li J."/>
            <person name="Wang J."/>
            <person name="Deng Y."/>
            <person name="Ran L."/>
            <person name="Shi X."/>
            <person name="Wang X."/>
            <person name="Wu Q."/>
            <person name="Li C."/>
            <person name="Ren X."/>
            <person name="Wang J."/>
            <person name="Wang X."/>
            <person name="Li D."/>
            <person name="Liu D."/>
            <person name="Zhang X."/>
            <person name="Ji Z."/>
            <person name="Zhao W."/>
            <person name="Sun Y."/>
            <person name="Zhang Z."/>
            <person name="Bao J."/>
            <person name="Han Y."/>
            <person name="Dong L."/>
            <person name="Ji J."/>
            <person name="Chen P."/>
            <person name="Wu S."/>
            <person name="Liu J."/>
            <person name="Xiao Y."/>
            <person name="Bu D."/>
            <person name="Tan J."/>
            <person name="Yang L."/>
            <person name="Ye C."/>
            <person name="Zhang J."/>
            <person name="Xu J."/>
            <person name="Zhou Y."/>
            <person name="Yu Y."/>
            <person name="Zhang B."/>
            <person name="Zhuang S."/>
            <person name="Wei H."/>
            <person name="Liu B."/>
            <person name="Lei M."/>
            <person name="Yu H."/>
            <person name="Li Y."/>
            <person name="Xu H."/>
            <person name="Wei S."/>
            <person name="He X."/>
            <person name="Fang L."/>
            <person name="Zhang Z."/>
            <person name="Zhang Y."/>
            <person name="Huang X."/>
            <person name="Su Z."/>
            <person name="Tong W."/>
            <person name="Li J."/>
            <person name="Tong Z."/>
            <person name="Li S."/>
            <person name="Ye J."/>
            <person name="Wang L."/>
            <person name="Fang L."/>
            <person name="Lei T."/>
            <person name="Chen C.-S."/>
            <person name="Chen H.-C."/>
            <person name="Xu Z."/>
            <person name="Li H."/>
            <person name="Huang H."/>
            <person name="Zhang F."/>
            <person name="Xu H."/>
            <person name="Li N."/>
            <person name="Zhao C."/>
            <person name="Li S."/>
            <person name="Dong L."/>
            <person name="Huang Y."/>
            <person name="Li L."/>
            <person name="Xi Y."/>
            <person name="Qi Q."/>
            <person name="Li W."/>
            <person name="Zhang B."/>
            <person name="Hu W."/>
            <person name="Zhang Y."/>
            <person name="Tian X."/>
            <person name="Jiao Y."/>
            <person name="Liang X."/>
            <person name="Jin J."/>
            <person name="Gao L."/>
            <person name="Zheng W."/>
            <person name="Hao B."/>
            <person name="Liu S.-M."/>
            <person name="Wang W."/>
            <person name="Yuan L."/>
            <person name="Cao M."/>
            <person name="McDermott J."/>
            <person name="Samudrala R."/>
            <person name="Wang J."/>
            <person name="Wong G.K.-S."/>
            <person name="Yang H."/>
        </authorList>
    </citation>
    <scope>NUCLEOTIDE SEQUENCE [LARGE SCALE GENOMIC DNA]</scope>
    <source>
        <strain>cv. Nipponbare</strain>
    </source>
</reference>
<reference key="6">
    <citation type="journal article" date="2003" name="Science">
        <title>Collection, mapping, and annotation of over 28,000 cDNA clones from japonica rice.</title>
        <authorList>
            <consortium name="The rice full-length cDNA consortium"/>
        </authorList>
    </citation>
    <scope>NUCLEOTIDE SEQUENCE [LARGE SCALE MRNA]</scope>
    <source>
        <strain>cv. Nipponbare</strain>
    </source>
</reference>
<reference key="7">
    <citation type="journal article" date="2007" name="Nature">
        <title>Direct control of shoot meristem activity by a cytokinin-activating enzyme.</title>
        <authorList>
            <person name="Kurakawa T."/>
            <person name="Ueda N."/>
            <person name="Maekawa M."/>
            <person name="Kobayashi K."/>
            <person name="Kojima M."/>
            <person name="Nagato Y."/>
            <person name="Sakakibara H."/>
            <person name="Kyozuka J."/>
        </authorList>
    </citation>
    <scope>IDENTIFICATION</scope>
    <scope>TISSUE SPECIFICITY</scope>
</reference>
<reference key="8">
    <citation type="journal article" date="2009" name="Plant Cell">
        <title>Functional analyses of LONELY GUY cytokinin-activating enzymes reveal the importance of the direct activation pathway in Arabidopsis.</title>
        <authorList>
            <person name="Kuroha T."/>
            <person name="Tokunaga H."/>
            <person name="Kojima M."/>
            <person name="Ueda N."/>
            <person name="Ishida T."/>
            <person name="Nagawa S."/>
            <person name="Fukuda H."/>
            <person name="Sugimoto K."/>
            <person name="Sakakibara H."/>
        </authorList>
    </citation>
    <scope>GENE FAMILY</scope>
    <scope>NOMENCLATURE</scope>
</reference>
<dbReference type="EC" id="3.2.2.n1"/>
<dbReference type="EMBL" id="AP003273">
    <property type="protein sequence ID" value="BAB92347.1"/>
    <property type="molecule type" value="Genomic_DNA"/>
</dbReference>
<dbReference type="EMBL" id="AP008207">
    <property type="protein sequence ID" value="BAF05941.1"/>
    <property type="molecule type" value="Genomic_DNA"/>
</dbReference>
<dbReference type="EMBL" id="AP014957">
    <property type="protein sequence ID" value="BAS73957.1"/>
    <property type="molecule type" value="Genomic_DNA"/>
</dbReference>
<dbReference type="EMBL" id="CM000138">
    <property type="protein sequence ID" value="EAZ13277.1"/>
    <property type="molecule type" value="Genomic_DNA"/>
</dbReference>
<dbReference type="EMBL" id="AK061091">
    <property type="protein sequence ID" value="BAG87720.1"/>
    <property type="molecule type" value="mRNA"/>
</dbReference>
<dbReference type="EMBL" id="AK099170">
    <property type="protein sequence ID" value="BAG93970.1"/>
    <property type="molecule type" value="mRNA"/>
</dbReference>
<dbReference type="RefSeq" id="XP_015611657.1">
    <property type="nucleotide sequence ID" value="XM_015756171.1"/>
</dbReference>
<dbReference type="SMR" id="Q8LR50"/>
<dbReference type="FunCoup" id="Q8LR50">
    <property type="interactions" value="28"/>
</dbReference>
<dbReference type="STRING" id="39947.Q8LR50"/>
<dbReference type="PaxDb" id="39947-Q8LR50"/>
<dbReference type="EnsemblPlants" id="Os01t0708500-01">
    <property type="protein sequence ID" value="Os01t0708500-01"/>
    <property type="gene ID" value="Os01g0708500"/>
</dbReference>
<dbReference type="EnsemblPlants" id="Os01t0708500-02">
    <property type="protein sequence ID" value="Os01t0708500-02"/>
    <property type="gene ID" value="Os01g0708500"/>
</dbReference>
<dbReference type="Gramene" id="Os01t0708500-01">
    <property type="protein sequence ID" value="Os01t0708500-01"/>
    <property type="gene ID" value="Os01g0708500"/>
</dbReference>
<dbReference type="Gramene" id="Os01t0708500-02">
    <property type="protein sequence ID" value="Os01t0708500-02"/>
    <property type="gene ID" value="Os01g0708500"/>
</dbReference>
<dbReference type="KEGG" id="dosa:Os01g0708500"/>
<dbReference type="eggNOG" id="ENOG502QTZZ">
    <property type="taxonomic scope" value="Eukaryota"/>
</dbReference>
<dbReference type="HOGENOM" id="CLU_058336_2_0_1"/>
<dbReference type="InParanoid" id="Q8LR50"/>
<dbReference type="OMA" id="HQKPIGL"/>
<dbReference type="OrthoDB" id="414463at2759"/>
<dbReference type="Proteomes" id="UP000000763">
    <property type="component" value="Chromosome 1"/>
</dbReference>
<dbReference type="Proteomes" id="UP000007752">
    <property type="component" value="Chromosome 1"/>
</dbReference>
<dbReference type="Proteomes" id="UP000059680">
    <property type="component" value="Chromosome 1"/>
</dbReference>
<dbReference type="ExpressionAtlas" id="Q8LR50">
    <property type="expression patterns" value="baseline and differential"/>
</dbReference>
<dbReference type="GO" id="GO:0005829">
    <property type="term" value="C:cytosol"/>
    <property type="evidence" value="ECO:0000318"/>
    <property type="project" value="GO_Central"/>
</dbReference>
<dbReference type="GO" id="GO:0005634">
    <property type="term" value="C:nucleus"/>
    <property type="evidence" value="ECO:0000318"/>
    <property type="project" value="GO_Central"/>
</dbReference>
<dbReference type="GO" id="GO:0102682">
    <property type="term" value="F:cytokinin riboside 5'-monophosphate phosphoribohydrolase activity"/>
    <property type="evidence" value="ECO:0000318"/>
    <property type="project" value="GO_Central"/>
</dbReference>
<dbReference type="GO" id="GO:0009691">
    <property type="term" value="P:cytokinin biosynthetic process"/>
    <property type="evidence" value="ECO:0000318"/>
    <property type="project" value="GO_Central"/>
</dbReference>
<dbReference type="FunFam" id="3.40.50.450:FF:000013">
    <property type="entry name" value="Cytokinin riboside 5'-monophosphate phosphoribohydrolase LOG8"/>
    <property type="match status" value="1"/>
</dbReference>
<dbReference type="Gene3D" id="3.40.50.450">
    <property type="match status" value="1"/>
</dbReference>
<dbReference type="InterPro" id="IPR005269">
    <property type="entry name" value="LOG"/>
</dbReference>
<dbReference type="InterPro" id="IPR031100">
    <property type="entry name" value="LOG_fam"/>
</dbReference>
<dbReference type="NCBIfam" id="TIGR00730">
    <property type="entry name" value="Rossman fold protein, TIGR00730 family"/>
    <property type="match status" value="1"/>
</dbReference>
<dbReference type="PANTHER" id="PTHR31223:SF11">
    <property type="entry name" value="CYTOKININ RIBOSIDE 5'-MONOPHOSPHATE PHOSPHORIBOHYDROLASE LOG8-RELATED"/>
    <property type="match status" value="1"/>
</dbReference>
<dbReference type="PANTHER" id="PTHR31223">
    <property type="entry name" value="LOG FAMILY PROTEIN YJL055W"/>
    <property type="match status" value="1"/>
</dbReference>
<dbReference type="Pfam" id="PF03641">
    <property type="entry name" value="Lysine_decarbox"/>
    <property type="match status" value="1"/>
</dbReference>
<dbReference type="SUPFAM" id="SSF102405">
    <property type="entry name" value="MCP/YpsA-like"/>
    <property type="match status" value="1"/>
</dbReference>
<gene>
    <name type="primary">LOGL1</name>
    <name type="ordered locus">Os01g0708500</name>
    <name type="ordered locus">LOC_Os01g51210</name>
    <name type="ORF">OsJ_03202</name>
    <name type="ORF">P0510F09.28</name>
</gene>
<protein>
    <recommendedName>
        <fullName>Probable cytokinin riboside 5'-monophosphate phosphoribohydrolase LOGL1</fullName>
        <ecNumber>3.2.2.n1</ecNumber>
    </recommendedName>
    <alternativeName>
        <fullName>Protein LONELY GUY-like 1</fullName>
    </alternativeName>
</protein>
<proteinExistence type="evidence at transcript level"/>
<organism>
    <name type="scientific">Oryza sativa subsp. japonica</name>
    <name type="common">Rice</name>
    <dbReference type="NCBI Taxonomy" id="39947"/>
    <lineage>
        <taxon>Eukaryota</taxon>
        <taxon>Viridiplantae</taxon>
        <taxon>Streptophyta</taxon>
        <taxon>Embryophyta</taxon>
        <taxon>Tracheophyta</taxon>
        <taxon>Spermatophyta</taxon>
        <taxon>Magnoliopsida</taxon>
        <taxon>Liliopsida</taxon>
        <taxon>Poales</taxon>
        <taxon>Poaceae</taxon>
        <taxon>BOP clade</taxon>
        <taxon>Oryzoideae</taxon>
        <taxon>Oryzeae</taxon>
        <taxon>Oryzinae</taxon>
        <taxon>Oryza</taxon>
        <taxon>Oryza sativa</taxon>
    </lineage>
</organism>
<evidence type="ECO:0000250" key="1"/>
<evidence type="ECO:0000250" key="2">
    <source>
        <dbReference type="UniProtKB" id="B2HS63"/>
    </source>
</evidence>
<evidence type="ECO:0000256" key="3">
    <source>
        <dbReference type="SAM" id="MobiDB-lite"/>
    </source>
</evidence>
<evidence type="ECO:0000269" key="4">
    <source>
    </source>
</evidence>
<evidence type="ECO:0000305" key="5"/>